<protein>
    <recommendedName>
        <fullName>Mu-agatoxin-Aa1c</fullName>
        <shortName>Mu-AGTX-Aa1c</shortName>
    </recommendedName>
    <alternativeName>
        <fullName evidence="3">Mu-agatoxin III</fullName>
    </alternativeName>
    <alternativeName>
        <fullName>Mu-agatoxin-3</fullName>
    </alternativeName>
</protein>
<reference key="1">
    <citation type="journal article" date="1989" name="J. Biol. Chem.">
        <title>Purification and characterization of two classes of neurotoxins from the funnel web spider, Agelenopsis aperta.</title>
        <authorList>
            <person name="Skinner W.S."/>
            <person name="Adams M.E."/>
            <person name="Quistad G.B."/>
            <person name="Kataoka H."/>
            <person name="Cesarin B.J."/>
            <person name="Enderlin F.E."/>
            <person name="Schooley D.A."/>
        </authorList>
    </citation>
    <scope>PROTEIN SEQUENCE</scope>
    <scope>FUNCTION</scope>
    <scope>SUBCELLULAR LOCATION</scope>
    <scope>AMIDATION AT SER-38</scope>
    <scope>TOXIC DOSE</scope>
    <source>
        <tissue>Venom</tissue>
    </source>
</reference>
<reference key="2">
    <citation type="journal article" date="2004" name="Toxicon">
        <title>Agatoxins: ion channel specific toxins from the American funnel web spider, Agelenopsis aperta.</title>
        <authorList>
            <person name="Adams M.E."/>
        </authorList>
    </citation>
    <scope>REVIEW</scope>
</reference>
<keyword id="KW-0027">Amidation</keyword>
<keyword id="KW-0903">Direct protein sequencing</keyword>
<keyword id="KW-1015">Disulfide bond</keyword>
<keyword id="KW-0872">Ion channel impairing toxin</keyword>
<keyword id="KW-0960">Knottin</keyword>
<keyword id="KW-0528">Neurotoxin</keyword>
<keyword id="KW-0638">Presynaptic neurotoxin</keyword>
<keyword id="KW-0964">Secreted</keyword>
<keyword id="KW-0800">Toxin</keyword>
<keyword id="KW-0738">Voltage-gated sodium channel impairing toxin</keyword>
<name>T3G1C_AGEAP</name>
<accession>P60178</accession>
<accession>P11059</accession>
<organism>
    <name type="scientific">Agelenopsis aperta</name>
    <name type="common">North American funnel-web spider</name>
    <name type="synonym">Agelenopsis gertschi</name>
    <dbReference type="NCBI Taxonomy" id="6908"/>
    <lineage>
        <taxon>Eukaryota</taxon>
        <taxon>Metazoa</taxon>
        <taxon>Ecdysozoa</taxon>
        <taxon>Arthropoda</taxon>
        <taxon>Chelicerata</taxon>
        <taxon>Arachnida</taxon>
        <taxon>Araneae</taxon>
        <taxon>Araneomorphae</taxon>
        <taxon>Entelegynae</taxon>
        <taxon>Agelenidae</taxon>
        <taxon>Agelenopsis</taxon>
    </lineage>
</organism>
<proteinExistence type="evidence at protein level"/>
<dbReference type="PIR" id="C32038">
    <property type="entry name" value="C32038"/>
</dbReference>
<dbReference type="SMR" id="P60178"/>
<dbReference type="ArachnoServer" id="AS000379">
    <property type="toxin name" value="mu-agatoxin-Aa1c"/>
</dbReference>
<dbReference type="GO" id="GO:0005576">
    <property type="term" value="C:extracellular region"/>
    <property type="evidence" value="ECO:0007669"/>
    <property type="project" value="UniProtKB-SubCell"/>
</dbReference>
<dbReference type="GO" id="GO:0044231">
    <property type="term" value="C:host cell presynaptic membrane"/>
    <property type="evidence" value="ECO:0007669"/>
    <property type="project" value="UniProtKB-KW"/>
</dbReference>
<dbReference type="GO" id="GO:0017080">
    <property type="term" value="F:sodium channel regulator activity"/>
    <property type="evidence" value="ECO:0007669"/>
    <property type="project" value="UniProtKB-KW"/>
</dbReference>
<dbReference type="GO" id="GO:0090729">
    <property type="term" value="F:toxin activity"/>
    <property type="evidence" value="ECO:0007669"/>
    <property type="project" value="UniProtKB-KW"/>
</dbReference>
<dbReference type="InterPro" id="IPR016328">
    <property type="entry name" value="Beta/delta-agatoxin_fam"/>
</dbReference>
<dbReference type="Pfam" id="PF05980">
    <property type="entry name" value="Toxin_7"/>
    <property type="match status" value="1"/>
</dbReference>
<dbReference type="PIRSF" id="PIRSF001882">
    <property type="entry name" value="Curtatoxin"/>
    <property type="match status" value="1"/>
</dbReference>
<dbReference type="SUPFAM" id="SSF57059">
    <property type="entry name" value="omega toxin-like"/>
    <property type="match status" value="1"/>
</dbReference>
<dbReference type="PROSITE" id="PS60015">
    <property type="entry name" value="MU_AGATOXIN"/>
    <property type="match status" value="1"/>
</dbReference>
<comment type="function">
    <text evidence="2">Insecticidal neurotoxin that induces an irreversible spastic paralysis when injected into insects. Modifies presynaptic voltage-gated sodium channels (Nav), causing them to open at the normal resting potential of the nerve. This leads to spontaneous release of neurotransmitter and repetitive action potentials in motor neurons.</text>
</comment>
<comment type="subcellular location">
    <subcellularLocation>
        <location evidence="2">Secreted</location>
    </subcellularLocation>
</comment>
<comment type="tissue specificity">
    <text evidence="5">Expressed by the venom gland.</text>
</comment>
<comment type="domain">
    <text evidence="1">The presence of a 'disulfide through disulfide knot' structurally defines this protein as a knottin.</text>
</comment>
<comment type="toxic dose">
    <text evidence="2">LD(50) is 28 +-12 mg/kg into third stadium larvae of M.sexta.</text>
</comment>
<comment type="similarity">
    <text evidence="4">Belongs to the neurotoxin 07 (Beta/delta-agtx) family. 02 (aga-3) subfamily.</text>
</comment>
<feature type="peptide" id="PRO_0000044955" description="Mu-agatoxin-Aa1c">
    <location>
        <begin position="1"/>
        <end position="38"/>
    </location>
</feature>
<feature type="modified residue" description="Serine amide" evidence="2">
    <location>
        <position position="38"/>
    </location>
</feature>
<feature type="disulfide bond" evidence="1">
    <location>
        <begin position="3"/>
        <end position="19"/>
    </location>
</feature>
<feature type="disulfide bond" evidence="1">
    <location>
        <begin position="10"/>
        <end position="24"/>
    </location>
</feature>
<feature type="disulfide bond" evidence="1">
    <location>
        <begin position="18"/>
        <end position="34"/>
    </location>
</feature>
<feature type="disulfide bond" evidence="1">
    <location>
        <begin position="26"/>
        <end position="32"/>
    </location>
</feature>
<evidence type="ECO:0000250" key="1"/>
<evidence type="ECO:0000269" key="2">
    <source>
    </source>
</evidence>
<evidence type="ECO:0000303" key="3">
    <source>
    </source>
</evidence>
<evidence type="ECO:0000305" key="4"/>
<evidence type="ECO:0000305" key="5">
    <source>
    </source>
</evidence>
<sequence length="38" mass="4197">ADCVGDGQRCADWAGPYCCSGYYCSCRSMPYCRCRSDS</sequence>